<dbReference type="EC" id="4.2.3.-" evidence="2"/>
<dbReference type="EC" id="4.2.3.106" evidence="2"/>
<dbReference type="EC" id="4.2.3.46" evidence="2"/>
<dbReference type="EMBL" id="MK946438">
    <property type="protein sequence ID" value="QIG55790.1"/>
    <property type="molecule type" value="mRNA"/>
</dbReference>
<dbReference type="EMBL" id="GL883090">
    <property type="protein sequence ID" value="EGG12841.1"/>
    <property type="status" value="ALT_SEQ"/>
    <property type="molecule type" value="Genomic_DNA"/>
</dbReference>
<dbReference type="RefSeq" id="XP_007403779.1">
    <property type="nucleotide sequence ID" value="XM_007403717.1"/>
</dbReference>
<dbReference type="SMR" id="A0A858E4Y8"/>
<dbReference type="STRING" id="747676.F4R4N5"/>
<dbReference type="EnsemblFungi" id="EGG12841">
    <property type="protein sequence ID" value="EGG12841"/>
    <property type="gene ID" value="MELLADRAFT_87140"/>
</dbReference>
<dbReference type="GeneID" id="18934409"/>
<dbReference type="KEGG" id="mlr:MELLADRAFT_87140"/>
<dbReference type="VEuPathDB" id="FungiDB:MELLADRAFT_87140"/>
<dbReference type="eggNOG" id="KOG0777">
    <property type="taxonomic scope" value="Eukaryota"/>
</dbReference>
<dbReference type="HOGENOM" id="CLU_014015_6_0_1"/>
<dbReference type="OrthoDB" id="6921389at2759"/>
<dbReference type="Proteomes" id="UP000001072">
    <property type="component" value="Unassembled WGS sequence"/>
</dbReference>
<dbReference type="GO" id="GO:0016829">
    <property type="term" value="F:lyase activity"/>
    <property type="evidence" value="ECO:0007669"/>
    <property type="project" value="UniProtKB-KW"/>
</dbReference>
<dbReference type="GO" id="GO:0046872">
    <property type="term" value="F:metal ion binding"/>
    <property type="evidence" value="ECO:0007669"/>
    <property type="project" value="UniProtKB-KW"/>
</dbReference>
<dbReference type="GO" id="GO:0004659">
    <property type="term" value="F:prenyltransferase activity"/>
    <property type="evidence" value="ECO:0007669"/>
    <property type="project" value="InterPro"/>
</dbReference>
<dbReference type="GO" id="GO:0008299">
    <property type="term" value="P:isoprenoid biosynthetic process"/>
    <property type="evidence" value="ECO:0007669"/>
    <property type="project" value="InterPro"/>
</dbReference>
<dbReference type="CDD" id="cd00867">
    <property type="entry name" value="Trans_IPPS"/>
    <property type="match status" value="1"/>
</dbReference>
<dbReference type="Gene3D" id="1.10.600.10">
    <property type="entry name" value="Farnesyl Diphosphate Synthase"/>
    <property type="match status" value="1"/>
</dbReference>
<dbReference type="InterPro" id="IPR008949">
    <property type="entry name" value="Isoprenoid_synthase_dom_sf"/>
</dbReference>
<dbReference type="InterPro" id="IPR000092">
    <property type="entry name" value="Polyprenyl_synt"/>
</dbReference>
<dbReference type="PANTHER" id="PTHR12001">
    <property type="entry name" value="GERANYLGERANYL PYROPHOSPHATE SYNTHASE"/>
    <property type="match status" value="1"/>
</dbReference>
<dbReference type="PANTHER" id="PTHR12001:SF44">
    <property type="entry name" value="GERANYLGERANYL PYROPHOSPHATE SYNTHASE"/>
    <property type="match status" value="1"/>
</dbReference>
<dbReference type="Pfam" id="PF00348">
    <property type="entry name" value="polyprenyl_synt"/>
    <property type="match status" value="1"/>
</dbReference>
<dbReference type="SFLD" id="SFLDS00005">
    <property type="entry name" value="Isoprenoid_Synthase_Type_I"/>
    <property type="match status" value="1"/>
</dbReference>
<dbReference type="SUPFAM" id="SSF48576">
    <property type="entry name" value="Terpenoid synthases"/>
    <property type="match status" value="1"/>
</dbReference>
<protein>
    <recommendedName>
        <fullName evidence="3">IDS-like terpene synthase 1</fullName>
        <shortName evidence="3">ILTPS1</shortName>
        <ecNumber evidence="2">4.2.3.-</ecNumber>
        <ecNumber evidence="2">4.2.3.106</ecNumber>
        <ecNumber evidence="2">4.2.3.46</ecNumber>
    </recommendedName>
</protein>
<proteinExistence type="evidence at protein level"/>
<evidence type="ECO:0000250" key="1">
    <source>
        <dbReference type="UniProtKB" id="Q12051"/>
    </source>
</evidence>
<evidence type="ECO:0000269" key="2">
    <source>
    </source>
</evidence>
<evidence type="ECO:0000303" key="3">
    <source>
    </source>
</evidence>
<evidence type="ECO:0000305" key="4"/>
<gene>
    <name evidence="3" type="primary">ILTPS1</name>
    <name type="ORF">MELLADRAFT_87140</name>
</gene>
<feature type="chain" id="PRO_0000457152" description="IDS-like terpene synthase 1">
    <location>
        <begin position="1"/>
        <end position="324"/>
    </location>
</feature>
<feature type="binding site" evidence="1">
    <location>
        <position position="77"/>
    </location>
    <ligand>
        <name>Mg(2+)</name>
        <dbReference type="ChEBI" id="CHEBI:18420"/>
        <label>1</label>
    </ligand>
</feature>
<feature type="binding site" evidence="1">
    <location>
        <position position="77"/>
    </location>
    <ligand>
        <name>Mg(2+)</name>
        <dbReference type="ChEBI" id="CHEBI:18420"/>
        <label>2</label>
    </ligand>
</feature>
<feature type="binding site" evidence="1">
    <location>
        <position position="81"/>
    </location>
    <ligand>
        <name>Mg(2+)</name>
        <dbReference type="ChEBI" id="CHEBI:18420"/>
        <label>1</label>
    </ligand>
</feature>
<feature type="binding site" evidence="1">
    <location>
        <position position="81"/>
    </location>
    <ligand>
        <name>Mg(2+)</name>
        <dbReference type="ChEBI" id="CHEBI:18420"/>
        <label>2</label>
    </ligand>
</feature>
<name>TPS1_MELLP</name>
<accession>A0A858E4Y8</accession>
<accession>F4R4N5</accession>
<keyword id="KW-0456">Lyase</keyword>
<keyword id="KW-0460">Magnesium</keyword>
<keyword id="KW-0479">Metal-binding</keyword>
<keyword id="KW-1185">Reference proteome</keyword>
<sequence>MSIYDDILKQFPTIDEWSDSDQKIMLEPYTYLGINTAKELPSMVTKALNHWYQVPQPALDIVLQIVGPIHAACLLIDDIQDDSDLRGGNPVAHKVYGVAQTINTATYVCFDAYHKISELRPFLKSPETIDLWSIINDEIAALHRGQWIDLYWRDSLICPTEEEYLRMIHNKTGAIFRLPMRLLQALSPVDSVPDCFPLVNIVGILVQIRNDLLSLSADFTKDKGFCEDFSEGKFSFPIIHSVKADSSNSLLMDILRLRPKDEATKMKALRYMKDQTKSLDHTFDVLCKLEKTAKQELEKLGGNSELSSIFERIHLSPTPEIEDH</sequence>
<reference key="1">
    <citation type="journal article" date="2020" name="Sci. Rep.">
        <title>Evolution of isoprenyl diphosphate synthase-like terpene synthases in fungi.</title>
        <authorList>
            <person name="Wei G."/>
            <person name="Eberl F."/>
            <person name="Chen X."/>
            <person name="Zhang C."/>
            <person name="Unsicker S.B."/>
            <person name="Koellner T.G."/>
            <person name="Gershenzon J."/>
            <person name="Chen F."/>
        </authorList>
    </citation>
    <scope>NUCLEOTIDE SEQUENCE [MRNA]</scope>
    <scope>FUNCTION</scope>
    <scope>CATALYTIC ACTIVITY</scope>
</reference>
<reference key="2">
    <citation type="journal article" date="2011" name="Proc. Natl. Acad. Sci. U.S.A.">
        <title>Obligate biotrophy features unraveled by the genomic analysis of rust fungi.</title>
        <authorList>
            <person name="Duplessis S."/>
            <person name="Cuomo C.A."/>
            <person name="Lin Y.-C."/>
            <person name="Aerts A."/>
            <person name="Tisserant E."/>
            <person name="Veneault-Fourrey C."/>
            <person name="Joly D.L."/>
            <person name="Hacquard S."/>
            <person name="Amselem J."/>
            <person name="Cantarel B.L."/>
            <person name="Chiu R."/>
            <person name="Coutinho P.M."/>
            <person name="Feau N."/>
            <person name="Field M."/>
            <person name="Frey P."/>
            <person name="Gelhaye E."/>
            <person name="Goldberg J."/>
            <person name="Grabherr M.G."/>
            <person name="Kodira C.D."/>
            <person name="Kohler A."/>
            <person name="Kuees U."/>
            <person name="Lindquist E.A."/>
            <person name="Lucas S.M."/>
            <person name="Mago R."/>
            <person name="Mauceli E."/>
            <person name="Morin E."/>
            <person name="Murat C."/>
            <person name="Pangilinan J.L."/>
            <person name="Park R."/>
            <person name="Pearson M."/>
            <person name="Quesneville H."/>
            <person name="Rouhier N."/>
            <person name="Sakthikumar S."/>
            <person name="Salamov A.A."/>
            <person name="Schmutz J."/>
            <person name="Selles B."/>
            <person name="Shapiro H."/>
            <person name="Tanguay P."/>
            <person name="Tuskan G.A."/>
            <person name="Henrissat B."/>
            <person name="Van de Peer Y."/>
            <person name="Rouze P."/>
            <person name="Ellis J.G."/>
            <person name="Dodds P.N."/>
            <person name="Schein J.E."/>
            <person name="Zhong S."/>
            <person name="Hamelin R.C."/>
            <person name="Grigoriev I.V."/>
            <person name="Szabo L.J."/>
            <person name="Martin F."/>
        </authorList>
    </citation>
    <scope>NUCLEOTIDE SEQUENCE [LARGE SCALE GENOMIC DNA]</scope>
    <source>
        <strain>98AG31 / pathotype 3-4-7</strain>
    </source>
</reference>
<organism>
    <name type="scientific">Melampsora larici-populina (strain 98AG31 / pathotype 3-4-7)</name>
    <name type="common">Poplar leaf rust fungus</name>
    <dbReference type="NCBI Taxonomy" id="747676"/>
    <lineage>
        <taxon>Eukaryota</taxon>
        <taxon>Fungi</taxon>
        <taxon>Dikarya</taxon>
        <taxon>Basidiomycota</taxon>
        <taxon>Pucciniomycotina</taxon>
        <taxon>Pucciniomycetes</taxon>
        <taxon>Pucciniales</taxon>
        <taxon>Melampsoraceae</taxon>
        <taxon>Melampsora</taxon>
    </lineage>
</organism>
<comment type="function">
    <text evidence="2">Terpene synthase that shows monoterpene synthase activity and produces (E)-beta-ocimene as a major product and linalool as a minor product, using geranyl diphosphate (GPP) as substrate (PubMed:32913319). Also shows sesquiterpene synthase activity as it is able to convert farnesyl diphosphate (FPP) into (E,E)-alpha-farnesene (PubMed:32913319). Finally, TPS1 can convert geranylgeranyl diphosphate into (E,E,E)-alpha-springene (PubMed:32913319).</text>
</comment>
<comment type="catalytic activity">
    <reaction evidence="2">
        <text>(2E)-geranyl diphosphate = (E)-beta-ocimene + diphosphate</text>
        <dbReference type="Rhea" id="RHEA:32691"/>
        <dbReference type="ChEBI" id="CHEBI:33019"/>
        <dbReference type="ChEBI" id="CHEBI:58057"/>
        <dbReference type="ChEBI" id="CHEBI:64280"/>
        <dbReference type="EC" id="4.2.3.106"/>
    </reaction>
    <physiologicalReaction direction="left-to-right" evidence="2">
        <dbReference type="Rhea" id="RHEA:32692"/>
    </physiologicalReaction>
</comment>
<comment type="catalytic activity">
    <reaction evidence="2">
        <text>(2E)-geranyl diphosphate + H2O = linalool + diphosphate</text>
        <dbReference type="Rhea" id="RHEA:68708"/>
        <dbReference type="ChEBI" id="CHEBI:15377"/>
        <dbReference type="ChEBI" id="CHEBI:17580"/>
        <dbReference type="ChEBI" id="CHEBI:33019"/>
        <dbReference type="ChEBI" id="CHEBI:58057"/>
    </reaction>
    <physiologicalReaction direction="left-to-right" evidence="2">
        <dbReference type="Rhea" id="RHEA:68709"/>
    </physiologicalReaction>
</comment>
<comment type="catalytic activity">
    <reaction evidence="2">
        <text>(2E,6E)-farnesyl diphosphate = (3E,6E)-alpha-farnesene + diphosphate</text>
        <dbReference type="Rhea" id="RHEA:27421"/>
        <dbReference type="ChEBI" id="CHEBI:10280"/>
        <dbReference type="ChEBI" id="CHEBI:33019"/>
        <dbReference type="ChEBI" id="CHEBI:175763"/>
        <dbReference type="EC" id="4.2.3.46"/>
    </reaction>
    <physiologicalReaction direction="left-to-right" evidence="2">
        <dbReference type="Rhea" id="RHEA:27422"/>
    </physiologicalReaction>
</comment>
<comment type="catalytic activity">
    <reaction evidence="2">
        <text>(2E,6E,10E)-geranylgeranyl diphosphate = (E,E,E)-alpha-springene + diphosphate</text>
        <dbReference type="Rhea" id="RHEA:74543"/>
        <dbReference type="ChEBI" id="CHEBI:33019"/>
        <dbReference type="ChEBI" id="CHEBI:58756"/>
        <dbReference type="ChEBI" id="CHEBI:192746"/>
    </reaction>
    <physiologicalReaction direction="left-to-right" evidence="2">
        <dbReference type="Rhea" id="RHEA:74544"/>
    </physiologicalReaction>
</comment>
<comment type="cofactor">
    <cofactor evidence="1">
        <name>Mg(2+)</name>
        <dbReference type="ChEBI" id="CHEBI:18420"/>
    </cofactor>
    <text evidence="1">Binds 2 Mg(2+) ions per subunit.</text>
</comment>
<comment type="miscellaneous">
    <text evidence="2">IDS-like terpene synthases originate from a geranylgeranyl diphosphate synthase (GGDPS) progenitor in fungi, after the split of Melampsora from other genera within the class of pucciniomycetes. They lack coupling activity and act as classical terpene synthases.</text>
</comment>
<comment type="similarity">
    <text evidence="4">Belongs to the FPP/GGPP synthase family.</text>
</comment>
<comment type="sequence caution" evidence="4">
    <conflict type="erroneous gene model prediction">
        <sequence resource="EMBL-CDS" id="EGG12841"/>
    </conflict>
</comment>